<reference key="1">
    <citation type="journal article" date="2007" name="Nat. Biotechnol.">
        <title>Genome sequence of the lignocellulose-bioconverting and xylose-fermenting yeast Pichia stipitis.</title>
        <authorList>
            <person name="Jeffries T.W."/>
            <person name="Grigoriev I.V."/>
            <person name="Grimwood J."/>
            <person name="Laplaza J.M."/>
            <person name="Aerts A."/>
            <person name="Salamov A."/>
            <person name="Schmutz J."/>
            <person name="Lindquist E."/>
            <person name="Dehal P."/>
            <person name="Shapiro H."/>
            <person name="Jin Y.-S."/>
            <person name="Passoth V."/>
            <person name="Richardson P.M."/>
        </authorList>
    </citation>
    <scope>NUCLEOTIDE SEQUENCE [LARGE SCALE GENOMIC DNA]</scope>
    <source>
        <strain>ATCC 58785 / CBS 6054 / NBRC 10063 / NRRL Y-11545</strain>
    </source>
</reference>
<keyword id="KW-0238">DNA-binding</keyword>
<keyword id="KW-0479">Metal-binding</keyword>
<keyword id="KW-0539">Nucleus</keyword>
<keyword id="KW-1185">Reference proteome</keyword>
<keyword id="KW-0804">Transcription</keyword>
<keyword id="KW-0805">Transcription regulation</keyword>
<keyword id="KW-0862">Zinc</keyword>
<evidence type="ECO:0000250" key="1"/>
<evidence type="ECO:0000255" key="2">
    <source>
        <dbReference type="PROSITE-ProRule" id="PRU00227"/>
    </source>
</evidence>
<evidence type="ECO:0000305" key="3"/>
<dbReference type="EMBL" id="CP000500">
    <property type="protein sequence ID" value="ABN67713.2"/>
    <property type="molecule type" value="Genomic_DNA"/>
</dbReference>
<dbReference type="RefSeq" id="XP_001385742.2">
    <property type="nucleotide sequence ID" value="XM_001385705.1"/>
</dbReference>
<dbReference type="FunCoup" id="A3LWY2">
    <property type="interactions" value="187"/>
</dbReference>
<dbReference type="GeneID" id="4840334"/>
<dbReference type="KEGG" id="pic:PICST_68007"/>
<dbReference type="eggNOG" id="ENOG502R2ZP">
    <property type="taxonomic scope" value="Eukaryota"/>
</dbReference>
<dbReference type="HOGENOM" id="CLU_010748_2_2_1"/>
<dbReference type="InParanoid" id="A3LWY2"/>
<dbReference type="OMA" id="FCHEKHL"/>
<dbReference type="OrthoDB" id="2538135at2759"/>
<dbReference type="Proteomes" id="UP000002258">
    <property type="component" value="Chromosome 6"/>
</dbReference>
<dbReference type="GO" id="GO:0005634">
    <property type="term" value="C:nucleus"/>
    <property type="evidence" value="ECO:0007669"/>
    <property type="project" value="UniProtKB-SubCell"/>
</dbReference>
<dbReference type="GO" id="GO:0000981">
    <property type="term" value="F:DNA-binding transcription factor activity, RNA polymerase II-specific"/>
    <property type="evidence" value="ECO:0007669"/>
    <property type="project" value="InterPro"/>
</dbReference>
<dbReference type="GO" id="GO:0000977">
    <property type="term" value="F:RNA polymerase II transcription regulatory region sequence-specific DNA binding"/>
    <property type="evidence" value="ECO:0007669"/>
    <property type="project" value="TreeGrafter"/>
</dbReference>
<dbReference type="GO" id="GO:0008270">
    <property type="term" value="F:zinc ion binding"/>
    <property type="evidence" value="ECO:0007669"/>
    <property type="project" value="InterPro"/>
</dbReference>
<dbReference type="GO" id="GO:0009267">
    <property type="term" value="P:cellular response to starvation"/>
    <property type="evidence" value="ECO:0007669"/>
    <property type="project" value="TreeGrafter"/>
</dbReference>
<dbReference type="CDD" id="cd00067">
    <property type="entry name" value="GAL4"/>
    <property type="match status" value="1"/>
</dbReference>
<dbReference type="Gene3D" id="4.10.240.10">
    <property type="entry name" value="Zn(2)-C6 fungal-type DNA-binding domain"/>
    <property type="match status" value="1"/>
</dbReference>
<dbReference type="InterPro" id="IPR050335">
    <property type="entry name" value="ERT1_acuK_gluconeogen_tf"/>
</dbReference>
<dbReference type="InterPro" id="IPR056751">
    <property type="entry name" value="PAS_13"/>
</dbReference>
<dbReference type="InterPro" id="IPR036864">
    <property type="entry name" value="Zn2-C6_fun-type_DNA-bd_sf"/>
</dbReference>
<dbReference type="InterPro" id="IPR001138">
    <property type="entry name" value="Zn2Cys6_DnaBD"/>
</dbReference>
<dbReference type="PANTHER" id="PTHR47659:SF8">
    <property type="entry name" value="GLUCOSE STARVATION MODULATOR PROTEIN 1"/>
    <property type="match status" value="1"/>
</dbReference>
<dbReference type="PANTHER" id="PTHR47659">
    <property type="entry name" value="ZN(II)2CYS6 TRANSCRIPTION FACTOR (EUROFUNG)-RELATED"/>
    <property type="match status" value="1"/>
</dbReference>
<dbReference type="Pfam" id="PF24990">
    <property type="entry name" value="PAS_13"/>
    <property type="match status" value="1"/>
</dbReference>
<dbReference type="Pfam" id="PF00172">
    <property type="entry name" value="Zn_clus"/>
    <property type="match status" value="1"/>
</dbReference>
<dbReference type="SMART" id="SM00066">
    <property type="entry name" value="GAL4"/>
    <property type="match status" value="1"/>
</dbReference>
<dbReference type="SUPFAM" id="SSF57701">
    <property type="entry name" value="Zn2/Cys6 DNA-binding domain"/>
    <property type="match status" value="1"/>
</dbReference>
<dbReference type="PROSITE" id="PS00463">
    <property type="entry name" value="ZN2_CY6_FUNGAL_1"/>
    <property type="match status" value="1"/>
</dbReference>
<dbReference type="PROSITE" id="PS50048">
    <property type="entry name" value="ZN2_CY6_FUNGAL_2"/>
    <property type="match status" value="1"/>
</dbReference>
<protein>
    <recommendedName>
        <fullName>Glucose starvation modulator protein 1</fullName>
    </recommendedName>
</protein>
<proteinExistence type="inferred from homology"/>
<sequence>MTKRLSPHEKKNRKPASRACVFCHEKHLQCSNERPCKNCVKRGLAHECRDVIRKRAKYLNTNSRRGSEAQAHADYPHNPIDGFMSPTIKPEIPSPASNMVVSPQFVGNALLQQEVQHPQQFHPQQQQKLSLHNSMLNTTNDVLNRLLEEQNFKDTDSDNMSANSVNASRPNTAIGTGTFSSNYLNEEYLMLGDIILHSKPTSPSPSNTSVSEYNTNTVSPNFSSQINYDDLNQPRRKVLQRLKDSRPFISLGFSNESSQLPNLNSSNIAQSSSIPTEYVSPLVTHHLYQSVQDIYTNNIMNFDYPQSYHSLTHFLKKRFSGNNLPAEQKQAKRQSLLVILKLIASYRPTFISAHKSLLKPYDLQFLEMTFQRCLIDYEKLSQLNSSPTIIWRRTGEIVSITDDLLSLLGYNLADLLSHRTFIMELMYDDESITNYFRLFKTVAVGNLHSSIITKIKLTKNQNRNVSDQTGTRRLSYELSERDHIEFCSVWTVKRDMFDLPMMIIGQFLPILPAGDGVRMY</sequence>
<organism>
    <name type="scientific">Scheffersomyces stipitis (strain ATCC 58785 / CBS 6054 / NBRC 10063 / NRRL Y-11545)</name>
    <name type="common">Yeast</name>
    <name type="synonym">Pichia stipitis</name>
    <dbReference type="NCBI Taxonomy" id="322104"/>
    <lineage>
        <taxon>Eukaryota</taxon>
        <taxon>Fungi</taxon>
        <taxon>Dikarya</taxon>
        <taxon>Ascomycota</taxon>
        <taxon>Saccharomycotina</taxon>
        <taxon>Pichiomycetes</taxon>
        <taxon>Debaryomycetaceae</taxon>
        <taxon>Scheffersomyces</taxon>
    </lineage>
</organism>
<feature type="chain" id="PRO_0000406490" description="Glucose starvation modulator protein 1">
    <location>
        <begin position="1"/>
        <end position="520"/>
    </location>
</feature>
<feature type="domain" description="PAS">
    <location>
        <begin position="376"/>
        <end position="445"/>
    </location>
</feature>
<feature type="DNA-binding region" description="Zn(2)-C6 fungal-type" evidence="2">
    <location>
        <begin position="20"/>
        <end position="48"/>
    </location>
</feature>
<gene>
    <name type="primary">GSM1</name>
    <name type="synonym">HBR1</name>
    <name type="ORF">PICST_68007</name>
</gene>
<name>GSM1_PICST</name>
<comment type="function">
    <text evidence="1">Transcription factor which regulates nonfermentable carbon utilization.</text>
</comment>
<comment type="subcellular location">
    <subcellularLocation>
        <location evidence="2">Nucleus</location>
    </subcellularLocation>
</comment>
<comment type="similarity">
    <text evidence="3">Belongs to the ERT1/acuK family.</text>
</comment>
<accession>A3LWY2</accession>